<gene>
    <name evidence="1" type="primary">minE</name>
    <name type="ordered locus">NATL1_04121</name>
</gene>
<keyword id="KW-0131">Cell cycle</keyword>
<keyword id="KW-0132">Cell division</keyword>
<sequence>MAMTLRDIINKLLRRQPASASTARERLQLVLAHDRSDLSTELLDQMRKEILEVVAKYVEIDVDEGAVSLETEDRMTALVANLPIKRTITGQIQLKEPKNQSELDSPETEGTDQKS</sequence>
<reference key="1">
    <citation type="journal article" date="2007" name="PLoS Genet.">
        <title>Patterns and implications of gene gain and loss in the evolution of Prochlorococcus.</title>
        <authorList>
            <person name="Kettler G.C."/>
            <person name="Martiny A.C."/>
            <person name="Huang K."/>
            <person name="Zucker J."/>
            <person name="Coleman M.L."/>
            <person name="Rodrigue S."/>
            <person name="Chen F."/>
            <person name="Lapidus A."/>
            <person name="Ferriera S."/>
            <person name="Johnson J."/>
            <person name="Steglich C."/>
            <person name="Church G.M."/>
            <person name="Richardson P."/>
            <person name="Chisholm S.W."/>
        </authorList>
    </citation>
    <scope>NUCLEOTIDE SEQUENCE [LARGE SCALE GENOMIC DNA]</scope>
    <source>
        <strain>NATL1A</strain>
    </source>
</reference>
<proteinExistence type="inferred from homology"/>
<protein>
    <recommendedName>
        <fullName evidence="1">Cell division topological specificity factor</fullName>
    </recommendedName>
</protein>
<comment type="function">
    <text evidence="1">Prevents the cell division inhibition by proteins MinC and MinD at internal division sites while permitting inhibition at polar sites. This ensures cell division at the proper site by restricting the formation of a division septum at the midpoint of the long axis of the cell.</text>
</comment>
<comment type="similarity">
    <text evidence="1">Belongs to the MinE family.</text>
</comment>
<accession>A2C0G6</accession>
<feature type="chain" id="PRO_0000298154" description="Cell division topological specificity factor">
    <location>
        <begin position="1"/>
        <end position="115"/>
    </location>
</feature>
<feature type="region of interest" description="Disordered" evidence="2">
    <location>
        <begin position="93"/>
        <end position="115"/>
    </location>
</feature>
<feature type="compositionally biased region" description="Acidic residues" evidence="2">
    <location>
        <begin position="104"/>
        <end position="115"/>
    </location>
</feature>
<dbReference type="EMBL" id="CP000553">
    <property type="protein sequence ID" value="ABM74976.1"/>
    <property type="molecule type" value="Genomic_DNA"/>
</dbReference>
<dbReference type="SMR" id="A2C0G6"/>
<dbReference type="KEGG" id="pme:NATL1_04121"/>
<dbReference type="eggNOG" id="COG0851">
    <property type="taxonomic scope" value="Bacteria"/>
</dbReference>
<dbReference type="HOGENOM" id="CLU_137929_1_1_3"/>
<dbReference type="Proteomes" id="UP000002592">
    <property type="component" value="Chromosome"/>
</dbReference>
<dbReference type="GO" id="GO:0051301">
    <property type="term" value="P:cell division"/>
    <property type="evidence" value="ECO:0007669"/>
    <property type="project" value="UniProtKB-KW"/>
</dbReference>
<dbReference type="GO" id="GO:0032955">
    <property type="term" value="P:regulation of division septum assembly"/>
    <property type="evidence" value="ECO:0007669"/>
    <property type="project" value="InterPro"/>
</dbReference>
<dbReference type="Gene3D" id="3.30.1070.10">
    <property type="entry name" value="Cell division topological specificity factor MinE"/>
    <property type="match status" value="1"/>
</dbReference>
<dbReference type="HAMAP" id="MF_00262">
    <property type="entry name" value="MinE"/>
    <property type="match status" value="1"/>
</dbReference>
<dbReference type="InterPro" id="IPR005527">
    <property type="entry name" value="MinE"/>
</dbReference>
<dbReference type="InterPro" id="IPR036707">
    <property type="entry name" value="MinE_sf"/>
</dbReference>
<dbReference type="NCBIfam" id="TIGR01215">
    <property type="entry name" value="minE"/>
    <property type="match status" value="1"/>
</dbReference>
<dbReference type="NCBIfam" id="NF001422">
    <property type="entry name" value="PRK00296.1"/>
    <property type="match status" value="1"/>
</dbReference>
<dbReference type="Pfam" id="PF03776">
    <property type="entry name" value="MinE"/>
    <property type="match status" value="1"/>
</dbReference>
<dbReference type="SUPFAM" id="SSF55229">
    <property type="entry name" value="Cell division protein MinE topological specificity domain"/>
    <property type="match status" value="1"/>
</dbReference>
<organism>
    <name type="scientific">Prochlorococcus marinus (strain NATL1A)</name>
    <dbReference type="NCBI Taxonomy" id="167555"/>
    <lineage>
        <taxon>Bacteria</taxon>
        <taxon>Bacillati</taxon>
        <taxon>Cyanobacteriota</taxon>
        <taxon>Cyanophyceae</taxon>
        <taxon>Synechococcales</taxon>
        <taxon>Prochlorococcaceae</taxon>
        <taxon>Prochlorococcus</taxon>
    </lineage>
</organism>
<evidence type="ECO:0000255" key="1">
    <source>
        <dbReference type="HAMAP-Rule" id="MF_00262"/>
    </source>
</evidence>
<evidence type="ECO:0000256" key="2">
    <source>
        <dbReference type="SAM" id="MobiDB-lite"/>
    </source>
</evidence>
<name>MINE_PROM1</name>